<accession>A9M423</accession>
<evidence type="ECO:0000255" key="1">
    <source>
        <dbReference type="HAMAP-Rule" id="MF_01334"/>
    </source>
</evidence>
<evidence type="ECO:0000305" key="2"/>
<reference key="1">
    <citation type="journal article" date="2008" name="Genomics">
        <title>Characterization of ST-4821 complex, a unique Neisseria meningitidis clone.</title>
        <authorList>
            <person name="Peng J."/>
            <person name="Yang L."/>
            <person name="Yang F."/>
            <person name="Yang J."/>
            <person name="Yan Y."/>
            <person name="Nie H."/>
            <person name="Zhang X."/>
            <person name="Xiong Z."/>
            <person name="Jiang Y."/>
            <person name="Cheng F."/>
            <person name="Xu X."/>
            <person name="Chen S."/>
            <person name="Sun L."/>
            <person name="Li W."/>
            <person name="Shen Y."/>
            <person name="Shao Z."/>
            <person name="Liang X."/>
            <person name="Xu J."/>
            <person name="Jin Q."/>
        </authorList>
    </citation>
    <scope>NUCLEOTIDE SEQUENCE [LARGE SCALE GENOMIC DNA]</scope>
    <source>
        <strain>053442</strain>
    </source>
</reference>
<feature type="chain" id="PRO_1000086632" description="Large ribosomal subunit protein bL25">
    <location>
        <begin position="1"/>
        <end position="190"/>
    </location>
</feature>
<organism>
    <name type="scientific">Neisseria meningitidis serogroup C (strain 053442)</name>
    <dbReference type="NCBI Taxonomy" id="374833"/>
    <lineage>
        <taxon>Bacteria</taxon>
        <taxon>Pseudomonadati</taxon>
        <taxon>Pseudomonadota</taxon>
        <taxon>Betaproteobacteria</taxon>
        <taxon>Neisseriales</taxon>
        <taxon>Neisseriaceae</taxon>
        <taxon>Neisseria</taxon>
    </lineage>
</organism>
<name>RL25_NEIM0</name>
<gene>
    <name evidence="1" type="primary">rplY</name>
    <name evidence="1" type="synonym">ctc</name>
    <name type="ordered locus">NMCC_0838</name>
</gene>
<dbReference type="EMBL" id="CP000381">
    <property type="protein sequence ID" value="ABX73022.1"/>
    <property type="molecule type" value="Genomic_DNA"/>
</dbReference>
<dbReference type="RefSeq" id="WP_002213865.1">
    <property type="nucleotide sequence ID" value="NC_010120.1"/>
</dbReference>
<dbReference type="SMR" id="A9M423"/>
<dbReference type="KEGG" id="nmn:NMCC_0838"/>
<dbReference type="HOGENOM" id="CLU_075939_0_1_4"/>
<dbReference type="Proteomes" id="UP000001177">
    <property type="component" value="Chromosome"/>
</dbReference>
<dbReference type="GO" id="GO:0022625">
    <property type="term" value="C:cytosolic large ribosomal subunit"/>
    <property type="evidence" value="ECO:0007669"/>
    <property type="project" value="TreeGrafter"/>
</dbReference>
<dbReference type="GO" id="GO:0008097">
    <property type="term" value="F:5S rRNA binding"/>
    <property type="evidence" value="ECO:0007669"/>
    <property type="project" value="InterPro"/>
</dbReference>
<dbReference type="GO" id="GO:0003735">
    <property type="term" value="F:structural constituent of ribosome"/>
    <property type="evidence" value="ECO:0007669"/>
    <property type="project" value="InterPro"/>
</dbReference>
<dbReference type="GO" id="GO:0006412">
    <property type="term" value="P:translation"/>
    <property type="evidence" value="ECO:0007669"/>
    <property type="project" value="UniProtKB-UniRule"/>
</dbReference>
<dbReference type="CDD" id="cd00495">
    <property type="entry name" value="Ribosomal_L25_TL5_CTC"/>
    <property type="match status" value="1"/>
</dbReference>
<dbReference type="FunFam" id="2.170.120.20:FF:000003">
    <property type="entry name" value="50S ribosomal protein L25"/>
    <property type="match status" value="1"/>
</dbReference>
<dbReference type="FunFam" id="2.40.240.10:FF:000002">
    <property type="entry name" value="50S ribosomal protein L25"/>
    <property type="match status" value="1"/>
</dbReference>
<dbReference type="Gene3D" id="2.170.120.20">
    <property type="entry name" value="Ribosomal protein L25, beta domain"/>
    <property type="match status" value="1"/>
</dbReference>
<dbReference type="Gene3D" id="2.40.240.10">
    <property type="entry name" value="Ribosomal Protein L25, Chain P"/>
    <property type="match status" value="1"/>
</dbReference>
<dbReference type="HAMAP" id="MF_01336">
    <property type="entry name" value="Ribosomal_bL25"/>
    <property type="match status" value="1"/>
</dbReference>
<dbReference type="HAMAP" id="MF_01334">
    <property type="entry name" value="Ribosomal_bL25_CTC"/>
    <property type="match status" value="1"/>
</dbReference>
<dbReference type="InterPro" id="IPR020056">
    <property type="entry name" value="Rbsml_bL25/Gln-tRNA_synth_N"/>
</dbReference>
<dbReference type="InterPro" id="IPR011035">
    <property type="entry name" value="Ribosomal_bL25/Gln-tRNA_synth"/>
</dbReference>
<dbReference type="InterPro" id="IPR020057">
    <property type="entry name" value="Ribosomal_bL25_b-dom"/>
</dbReference>
<dbReference type="InterPro" id="IPR037121">
    <property type="entry name" value="Ribosomal_bL25_C"/>
</dbReference>
<dbReference type="InterPro" id="IPR001021">
    <property type="entry name" value="Ribosomal_bL25_long"/>
</dbReference>
<dbReference type="InterPro" id="IPR020055">
    <property type="entry name" value="Ribosomal_bL25_short"/>
</dbReference>
<dbReference type="InterPro" id="IPR029751">
    <property type="entry name" value="Ribosomal_L25_dom"/>
</dbReference>
<dbReference type="InterPro" id="IPR020930">
    <property type="entry name" value="Ribosomal_uL5_bac-type"/>
</dbReference>
<dbReference type="NCBIfam" id="TIGR00731">
    <property type="entry name" value="bL25_bact_ctc"/>
    <property type="match status" value="1"/>
</dbReference>
<dbReference type="NCBIfam" id="NF004128">
    <property type="entry name" value="PRK05618.1-2"/>
    <property type="match status" value="1"/>
</dbReference>
<dbReference type="NCBIfam" id="NF004130">
    <property type="entry name" value="PRK05618.1-5"/>
    <property type="match status" value="1"/>
</dbReference>
<dbReference type="NCBIfam" id="NF004612">
    <property type="entry name" value="PRK05943.1"/>
    <property type="match status" value="1"/>
</dbReference>
<dbReference type="PANTHER" id="PTHR33284">
    <property type="entry name" value="RIBOSOMAL PROTEIN L25/GLN-TRNA SYNTHETASE, ANTI-CODON-BINDING DOMAIN-CONTAINING PROTEIN"/>
    <property type="match status" value="1"/>
</dbReference>
<dbReference type="PANTHER" id="PTHR33284:SF1">
    <property type="entry name" value="RIBOSOMAL PROTEIN L25_GLN-TRNA SYNTHETASE, ANTI-CODON-BINDING DOMAIN-CONTAINING PROTEIN"/>
    <property type="match status" value="1"/>
</dbReference>
<dbReference type="Pfam" id="PF01386">
    <property type="entry name" value="Ribosomal_L25p"/>
    <property type="match status" value="1"/>
</dbReference>
<dbReference type="Pfam" id="PF14693">
    <property type="entry name" value="Ribosomal_TL5_C"/>
    <property type="match status" value="1"/>
</dbReference>
<dbReference type="SUPFAM" id="SSF50715">
    <property type="entry name" value="Ribosomal protein L25-like"/>
    <property type="match status" value="1"/>
</dbReference>
<sequence>MTYEIQASVREAQGTGASRRLRREGQIPGILYGEGQEPVAIAVDHKTVFYALEKESFHTALIKLSLNGETKDVIVRDFQMHPFRREVQHIDFQAVKADQLVRIRVPLHIVNAENSQAVKLQGGRVSLLNTSVEVVALPANIPAFLDLDCAEVVAGDILHLSDIKLPEGVESVSLKRNENLAVATVTGKKR</sequence>
<comment type="function">
    <text evidence="1">This is one of the proteins that binds to the 5S RNA in the ribosome where it forms part of the central protuberance.</text>
</comment>
<comment type="subunit">
    <text evidence="1">Part of the 50S ribosomal subunit; part of the 5S rRNA/L5/L18/L25 subcomplex. Contacts the 5S rRNA. Binds to the 5S rRNA independently of L5 and L18.</text>
</comment>
<comment type="similarity">
    <text evidence="1">Belongs to the bacterial ribosomal protein bL25 family. CTC subfamily.</text>
</comment>
<keyword id="KW-0687">Ribonucleoprotein</keyword>
<keyword id="KW-0689">Ribosomal protein</keyword>
<keyword id="KW-0694">RNA-binding</keyword>
<keyword id="KW-0699">rRNA-binding</keyword>
<proteinExistence type="inferred from homology"/>
<protein>
    <recommendedName>
        <fullName evidence="1">Large ribosomal subunit protein bL25</fullName>
    </recommendedName>
    <alternativeName>
        <fullName evidence="2">50S ribosomal protein L25</fullName>
    </alternativeName>
    <alternativeName>
        <fullName evidence="1">General stress protein CTC</fullName>
    </alternativeName>
</protein>